<dbReference type="EC" id="3.1.11.6" evidence="1"/>
<dbReference type="EMBL" id="AE007869">
    <property type="protein sequence ID" value="AAK86556.2"/>
    <property type="status" value="ALT_INIT"/>
    <property type="molecule type" value="Genomic_DNA"/>
</dbReference>
<dbReference type="PIR" id="AE2668">
    <property type="entry name" value="AE2668"/>
</dbReference>
<dbReference type="PIR" id="C97450">
    <property type="entry name" value="C97450"/>
</dbReference>
<dbReference type="RefSeq" id="NP_353771.2">
    <property type="nucleotide sequence ID" value="NC_003062.2"/>
</dbReference>
<dbReference type="SMR" id="Q8UHD5"/>
<dbReference type="STRING" id="176299.Atu0747"/>
<dbReference type="EnsemblBacteria" id="AAK86556">
    <property type="protein sequence ID" value="AAK86556"/>
    <property type="gene ID" value="Atu0747"/>
</dbReference>
<dbReference type="KEGG" id="atu:Atu0747"/>
<dbReference type="PATRIC" id="fig|176299.10.peg.744"/>
<dbReference type="eggNOG" id="COG1722">
    <property type="taxonomic scope" value="Bacteria"/>
</dbReference>
<dbReference type="HOGENOM" id="CLU_145918_0_3_5"/>
<dbReference type="OrthoDB" id="9808145at2"/>
<dbReference type="BioCyc" id="AGRO:ATU0747-MONOMER"/>
<dbReference type="Proteomes" id="UP000000813">
    <property type="component" value="Chromosome circular"/>
</dbReference>
<dbReference type="GO" id="GO:0005829">
    <property type="term" value="C:cytosol"/>
    <property type="evidence" value="ECO:0007669"/>
    <property type="project" value="TreeGrafter"/>
</dbReference>
<dbReference type="GO" id="GO:0009318">
    <property type="term" value="C:exodeoxyribonuclease VII complex"/>
    <property type="evidence" value="ECO:0007669"/>
    <property type="project" value="InterPro"/>
</dbReference>
<dbReference type="GO" id="GO:0008855">
    <property type="term" value="F:exodeoxyribonuclease VII activity"/>
    <property type="evidence" value="ECO:0007669"/>
    <property type="project" value="UniProtKB-UniRule"/>
</dbReference>
<dbReference type="GO" id="GO:0006308">
    <property type="term" value="P:DNA catabolic process"/>
    <property type="evidence" value="ECO:0007669"/>
    <property type="project" value="UniProtKB-UniRule"/>
</dbReference>
<dbReference type="Gene3D" id="1.10.287.1040">
    <property type="entry name" value="Exonuclease VII, small subunit"/>
    <property type="match status" value="1"/>
</dbReference>
<dbReference type="HAMAP" id="MF_00337">
    <property type="entry name" value="Exonuc_7_S"/>
    <property type="match status" value="1"/>
</dbReference>
<dbReference type="InterPro" id="IPR003761">
    <property type="entry name" value="Exonuc_VII_S"/>
</dbReference>
<dbReference type="InterPro" id="IPR037004">
    <property type="entry name" value="Exonuc_VII_ssu_sf"/>
</dbReference>
<dbReference type="NCBIfam" id="NF002139">
    <property type="entry name" value="PRK00977.1-3"/>
    <property type="match status" value="1"/>
</dbReference>
<dbReference type="NCBIfam" id="TIGR01280">
    <property type="entry name" value="xseB"/>
    <property type="match status" value="1"/>
</dbReference>
<dbReference type="PANTHER" id="PTHR34137">
    <property type="entry name" value="EXODEOXYRIBONUCLEASE 7 SMALL SUBUNIT"/>
    <property type="match status" value="1"/>
</dbReference>
<dbReference type="PANTHER" id="PTHR34137:SF1">
    <property type="entry name" value="EXODEOXYRIBONUCLEASE 7 SMALL SUBUNIT"/>
    <property type="match status" value="1"/>
</dbReference>
<dbReference type="Pfam" id="PF02609">
    <property type="entry name" value="Exonuc_VII_S"/>
    <property type="match status" value="1"/>
</dbReference>
<dbReference type="SUPFAM" id="SSF116842">
    <property type="entry name" value="XseB-like"/>
    <property type="match status" value="1"/>
</dbReference>
<gene>
    <name evidence="1" type="primary">xseB</name>
    <name type="ordered locus">Atu0747</name>
    <name type="ORF">AGR_C_1356</name>
</gene>
<feature type="chain" id="PRO_0000206911" description="Exodeoxyribonuclease 7 small subunit">
    <location>
        <begin position="1"/>
        <end position="86"/>
    </location>
</feature>
<reference key="1">
    <citation type="journal article" date="2001" name="Science">
        <title>The genome of the natural genetic engineer Agrobacterium tumefaciens C58.</title>
        <authorList>
            <person name="Wood D.W."/>
            <person name="Setubal J.C."/>
            <person name="Kaul R."/>
            <person name="Monks D.E."/>
            <person name="Kitajima J.P."/>
            <person name="Okura V.K."/>
            <person name="Zhou Y."/>
            <person name="Chen L."/>
            <person name="Wood G.E."/>
            <person name="Almeida N.F. Jr."/>
            <person name="Woo L."/>
            <person name="Chen Y."/>
            <person name="Paulsen I.T."/>
            <person name="Eisen J.A."/>
            <person name="Karp P.D."/>
            <person name="Bovee D. Sr."/>
            <person name="Chapman P."/>
            <person name="Clendenning J."/>
            <person name="Deatherage G."/>
            <person name="Gillet W."/>
            <person name="Grant C."/>
            <person name="Kutyavin T."/>
            <person name="Levy R."/>
            <person name="Li M.-J."/>
            <person name="McClelland E."/>
            <person name="Palmieri A."/>
            <person name="Raymond C."/>
            <person name="Rouse G."/>
            <person name="Saenphimmachak C."/>
            <person name="Wu Z."/>
            <person name="Romero P."/>
            <person name="Gordon D."/>
            <person name="Zhang S."/>
            <person name="Yoo H."/>
            <person name="Tao Y."/>
            <person name="Biddle P."/>
            <person name="Jung M."/>
            <person name="Krespan W."/>
            <person name="Perry M."/>
            <person name="Gordon-Kamm B."/>
            <person name="Liao L."/>
            <person name="Kim S."/>
            <person name="Hendrick C."/>
            <person name="Zhao Z.-Y."/>
            <person name="Dolan M."/>
            <person name="Chumley F."/>
            <person name="Tingey S.V."/>
            <person name="Tomb J.-F."/>
            <person name="Gordon M.P."/>
            <person name="Olson M.V."/>
            <person name="Nester E.W."/>
        </authorList>
    </citation>
    <scope>NUCLEOTIDE SEQUENCE [LARGE SCALE GENOMIC DNA]</scope>
    <source>
        <strain>C58 / ATCC 33970</strain>
    </source>
</reference>
<reference key="2">
    <citation type="journal article" date="2001" name="Science">
        <title>Genome sequence of the plant pathogen and biotechnology agent Agrobacterium tumefaciens C58.</title>
        <authorList>
            <person name="Goodner B."/>
            <person name="Hinkle G."/>
            <person name="Gattung S."/>
            <person name="Miller N."/>
            <person name="Blanchard M."/>
            <person name="Qurollo B."/>
            <person name="Goldman B.S."/>
            <person name="Cao Y."/>
            <person name="Askenazi M."/>
            <person name="Halling C."/>
            <person name="Mullin L."/>
            <person name="Houmiel K."/>
            <person name="Gordon J."/>
            <person name="Vaudin M."/>
            <person name="Iartchouk O."/>
            <person name="Epp A."/>
            <person name="Liu F."/>
            <person name="Wollam C."/>
            <person name="Allinger M."/>
            <person name="Doughty D."/>
            <person name="Scott C."/>
            <person name="Lappas C."/>
            <person name="Markelz B."/>
            <person name="Flanagan C."/>
            <person name="Crowell C."/>
            <person name="Gurson J."/>
            <person name="Lomo C."/>
            <person name="Sear C."/>
            <person name="Strub G."/>
            <person name="Cielo C."/>
            <person name="Slater S."/>
        </authorList>
    </citation>
    <scope>NUCLEOTIDE SEQUENCE [LARGE SCALE GENOMIC DNA]</scope>
    <source>
        <strain>C58 / ATCC 33970</strain>
    </source>
</reference>
<name>EX7S_AGRFC</name>
<comment type="function">
    <text evidence="1">Bidirectionally degrades single-stranded DNA into large acid-insoluble oligonucleotides, which are then degraded further into small acid-soluble oligonucleotides.</text>
</comment>
<comment type="catalytic activity">
    <reaction evidence="1">
        <text>Exonucleolytic cleavage in either 5'- to 3'- or 3'- to 5'-direction to yield nucleoside 5'-phosphates.</text>
        <dbReference type="EC" id="3.1.11.6"/>
    </reaction>
</comment>
<comment type="subunit">
    <text evidence="1">Heterooligomer composed of large and small subunits.</text>
</comment>
<comment type="subcellular location">
    <subcellularLocation>
        <location evidence="1">Cytoplasm</location>
    </subcellularLocation>
</comment>
<comment type="similarity">
    <text evidence="1">Belongs to the XseB family.</text>
</comment>
<comment type="sequence caution" evidence="2">
    <conflict type="erroneous initiation">
        <sequence resource="EMBL-CDS" id="AAK86556"/>
    </conflict>
</comment>
<organism>
    <name type="scientific">Agrobacterium fabrum (strain C58 / ATCC 33970)</name>
    <name type="common">Agrobacterium tumefaciens (strain C58)</name>
    <dbReference type="NCBI Taxonomy" id="176299"/>
    <lineage>
        <taxon>Bacteria</taxon>
        <taxon>Pseudomonadati</taxon>
        <taxon>Pseudomonadota</taxon>
        <taxon>Alphaproteobacteria</taxon>
        <taxon>Hyphomicrobiales</taxon>
        <taxon>Rhizobiaceae</taxon>
        <taxon>Rhizobium/Agrobacterium group</taxon>
        <taxon>Agrobacterium</taxon>
        <taxon>Agrobacterium tumefaciens complex</taxon>
    </lineage>
</organism>
<proteinExistence type="inferred from homology"/>
<protein>
    <recommendedName>
        <fullName evidence="1">Exodeoxyribonuclease 7 small subunit</fullName>
        <ecNumber evidence="1">3.1.11.6</ecNumber>
    </recommendedName>
    <alternativeName>
        <fullName evidence="1">Exodeoxyribonuclease VII small subunit</fullName>
        <shortName evidence="1">Exonuclease VII small subunit</shortName>
    </alternativeName>
</protein>
<keyword id="KW-0963">Cytoplasm</keyword>
<keyword id="KW-0269">Exonuclease</keyword>
<keyword id="KW-0378">Hydrolase</keyword>
<keyword id="KW-0540">Nuclease</keyword>
<keyword id="KW-1185">Reference proteome</keyword>
<accession>Q8UHD5</accession>
<sequence>MNMTENANTADVSGYSFEKAVAELESIVARLERGDVALDESIAIYERGEALKKHCETLLNAAEKRIEKIRLDRAGKPQGVEPLDGE</sequence>
<evidence type="ECO:0000255" key="1">
    <source>
        <dbReference type="HAMAP-Rule" id="MF_00337"/>
    </source>
</evidence>
<evidence type="ECO:0000305" key="2"/>